<feature type="chain" id="PRO_1000070289" description="Ribonuclease Z">
    <location>
        <begin position="1"/>
        <end position="307"/>
    </location>
</feature>
<feature type="active site" description="Proton acceptor" evidence="1">
    <location>
        <position position="67"/>
    </location>
</feature>
<feature type="binding site" evidence="1">
    <location>
        <position position="63"/>
    </location>
    <ligand>
        <name>Zn(2+)</name>
        <dbReference type="ChEBI" id="CHEBI:29105"/>
        <label>1</label>
        <note>catalytic</note>
    </ligand>
</feature>
<feature type="binding site" evidence="1">
    <location>
        <position position="65"/>
    </location>
    <ligand>
        <name>Zn(2+)</name>
        <dbReference type="ChEBI" id="CHEBI:29105"/>
        <label>1</label>
        <note>catalytic</note>
    </ligand>
</feature>
<feature type="binding site" evidence="1">
    <location>
        <position position="67"/>
    </location>
    <ligand>
        <name>Zn(2+)</name>
        <dbReference type="ChEBI" id="CHEBI:29105"/>
        <label>2</label>
        <note>catalytic</note>
    </ligand>
</feature>
<feature type="binding site" evidence="1">
    <location>
        <position position="68"/>
    </location>
    <ligand>
        <name>Zn(2+)</name>
        <dbReference type="ChEBI" id="CHEBI:29105"/>
        <label>2</label>
        <note>catalytic</note>
    </ligand>
</feature>
<feature type="binding site" evidence="1">
    <location>
        <position position="143"/>
    </location>
    <ligand>
        <name>Zn(2+)</name>
        <dbReference type="ChEBI" id="CHEBI:29105"/>
        <label>1</label>
        <note>catalytic</note>
    </ligand>
</feature>
<feature type="binding site" evidence="1">
    <location>
        <position position="213"/>
    </location>
    <ligand>
        <name>Zn(2+)</name>
        <dbReference type="ChEBI" id="CHEBI:29105"/>
        <label>1</label>
        <note>catalytic</note>
    </ligand>
</feature>
<feature type="binding site" evidence="1">
    <location>
        <position position="213"/>
    </location>
    <ligand>
        <name>Zn(2+)</name>
        <dbReference type="ChEBI" id="CHEBI:29105"/>
        <label>2</label>
        <note>catalytic</note>
    </ligand>
</feature>
<feature type="binding site" evidence="1">
    <location>
        <position position="271"/>
    </location>
    <ligand>
        <name>Zn(2+)</name>
        <dbReference type="ChEBI" id="CHEBI:29105"/>
        <label>2</label>
        <note>catalytic</note>
    </ligand>
</feature>
<proteinExistence type="inferred from homology"/>
<organism>
    <name type="scientific">Lactococcus lactis subsp. cremoris (strain MG1363)</name>
    <dbReference type="NCBI Taxonomy" id="416870"/>
    <lineage>
        <taxon>Bacteria</taxon>
        <taxon>Bacillati</taxon>
        <taxon>Bacillota</taxon>
        <taxon>Bacilli</taxon>
        <taxon>Lactobacillales</taxon>
        <taxon>Streptococcaceae</taxon>
        <taxon>Lactococcus</taxon>
        <taxon>Lactococcus cremoris subsp. cremoris</taxon>
    </lineage>
</organism>
<protein>
    <recommendedName>
        <fullName evidence="1">Ribonuclease Z</fullName>
        <shortName evidence="1">RNase Z</shortName>
        <ecNumber evidence="1">3.1.26.11</ecNumber>
    </recommendedName>
    <alternativeName>
        <fullName evidence="1">tRNA 3 endonuclease</fullName>
    </alternativeName>
    <alternativeName>
        <fullName evidence="1">tRNase Z</fullName>
    </alternativeName>
</protein>
<gene>
    <name evidence="1" type="primary">rnz</name>
    <name type="ordered locus">llmg_0604</name>
</gene>
<name>RNZ_LACLM</name>
<evidence type="ECO:0000255" key="1">
    <source>
        <dbReference type="HAMAP-Rule" id="MF_01818"/>
    </source>
</evidence>
<dbReference type="EC" id="3.1.26.11" evidence="1"/>
<dbReference type="EMBL" id="AM406671">
    <property type="protein sequence ID" value="CAL97204.1"/>
    <property type="molecule type" value="Genomic_DNA"/>
</dbReference>
<dbReference type="RefSeq" id="WP_011834620.1">
    <property type="nucleotide sequence ID" value="NC_009004.1"/>
</dbReference>
<dbReference type="SMR" id="A2RIV7"/>
<dbReference type="STRING" id="416870.llmg_0604"/>
<dbReference type="GeneID" id="61108908"/>
<dbReference type="KEGG" id="llm:llmg_0604"/>
<dbReference type="eggNOG" id="COG1234">
    <property type="taxonomic scope" value="Bacteria"/>
</dbReference>
<dbReference type="HOGENOM" id="CLU_031317_2_0_9"/>
<dbReference type="OrthoDB" id="9800940at2"/>
<dbReference type="PhylomeDB" id="A2RIV7"/>
<dbReference type="Proteomes" id="UP000000364">
    <property type="component" value="Chromosome"/>
</dbReference>
<dbReference type="GO" id="GO:0042781">
    <property type="term" value="F:3'-tRNA processing endoribonuclease activity"/>
    <property type="evidence" value="ECO:0007669"/>
    <property type="project" value="UniProtKB-UniRule"/>
</dbReference>
<dbReference type="GO" id="GO:0008270">
    <property type="term" value="F:zinc ion binding"/>
    <property type="evidence" value="ECO:0007669"/>
    <property type="project" value="UniProtKB-UniRule"/>
</dbReference>
<dbReference type="CDD" id="cd07717">
    <property type="entry name" value="RNaseZ_ZiPD-like_MBL-fold"/>
    <property type="match status" value="1"/>
</dbReference>
<dbReference type="FunFam" id="3.60.15.10:FF:000002">
    <property type="entry name" value="Ribonuclease Z"/>
    <property type="match status" value="1"/>
</dbReference>
<dbReference type="Gene3D" id="3.60.15.10">
    <property type="entry name" value="Ribonuclease Z/Hydroxyacylglutathione hydrolase-like"/>
    <property type="match status" value="1"/>
</dbReference>
<dbReference type="HAMAP" id="MF_01818">
    <property type="entry name" value="RNase_Z_BN"/>
    <property type="match status" value="1"/>
</dbReference>
<dbReference type="InterPro" id="IPR001279">
    <property type="entry name" value="Metallo-B-lactamas"/>
</dbReference>
<dbReference type="InterPro" id="IPR036866">
    <property type="entry name" value="RibonucZ/Hydroxyglut_hydro"/>
</dbReference>
<dbReference type="InterPro" id="IPR013471">
    <property type="entry name" value="RNase_Z/BN"/>
</dbReference>
<dbReference type="NCBIfam" id="NF000801">
    <property type="entry name" value="PRK00055.1-3"/>
    <property type="match status" value="1"/>
</dbReference>
<dbReference type="NCBIfam" id="TIGR02651">
    <property type="entry name" value="RNase_Z"/>
    <property type="match status" value="1"/>
</dbReference>
<dbReference type="PANTHER" id="PTHR46018">
    <property type="entry name" value="ZINC PHOSPHODIESTERASE ELAC PROTEIN 1"/>
    <property type="match status" value="1"/>
</dbReference>
<dbReference type="PANTHER" id="PTHR46018:SF2">
    <property type="entry name" value="ZINC PHOSPHODIESTERASE ELAC PROTEIN 1"/>
    <property type="match status" value="1"/>
</dbReference>
<dbReference type="Pfam" id="PF00753">
    <property type="entry name" value="Lactamase_B"/>
    <property type="match status" value="1"/>
</dbReference>
<dbReference type="SUPFAM" id="SSF56281">
    <property type="entry name" value="Metallo-hydrolase/oxidoreductase"/>
    <property type="match status" value="1"/>
</dbReference>
<sequence length="307" mass="33944">MEIQFLGTGAGQPSKSRNTQAIALKMLDERNEIWLFDCGEASQHQILNTAIKPRKITKIFITHLHGDHIFGLPGFLSSRSFQSSDEQTDLDLYGPVGIKEFVLAGLRISGSHLGYRINFHEIDSAGKIFEDDSFEVYTDLLDHTIFCLGYRVVEKNRVGELDANALKEAGLPFGPLFGKIKKGEVVDYDGKTFDPKDYIGADKVGKIVTILGDTRKTNTAVRLAWQADLLVHEATYEAAESKMARAHGHSTTKQAADVAKEAGVNRLLLTHISARYVGPLVGQLVREAQDVHANTFVAKDLYEEKIG</sequence>
<accession>A2RIV7</accession>
<keyword id="KW-0255">Endonuclease</keyword>
<keyword id="KW-0378">Hydrolase</keyword>
<keyword id="KW-0479">Metal-binding</keyword>
<keyword id="KW-0540">Nuclease</keyword>
<keyword id="KW-0819">tRNA processing</keyword>
<keyword id="KW-0862">Zinc</keyword>
<reference key="1">
    <citation type="journal article" date="2007" name="J. Bacteriol.">
        <title>The complete genome sequence of the lactic acid bacterial paradigm Lactococcus lactis subsp. cremoris MG1363.</title>
        <authorList>
            <person name="Wegmann U."/>
            <person name="O'Connell-Motherway M."/>
            <person name="Zomer A."/>
            <person name="Buist G."/>
            <person name="Shearman C."/>
            <person name="Canchaya C."/>
            <person name="Ventura M."/>
            <person name="Goesmann A."/>
            <person name="Gasson M.J."/>
            <person name="Kuipers O.P."/>
            <person name="van Sinderen D."/>
            <person name="Kok J."/>
        </authorList>
    </citation>
    <scope>NUCLEOTIDE SEQUENCE [LARGE SCALE GENOMIC DNA]</scope>
    <source>
        <strain>MG1363</strain>
    </source>
</reference>
<comment type="function">
    <text evidence="1">Zinc phosphodiesterase, which displays some tRNA 3'-processing endonuclease activity. Probably involved in tRNA maturation, by removing a 3'-trailer from precursor tRNA.</text>
</comment>
<comment type="catalytic activity">
    <reaction evidence="1">
        <text>Endonucleolytic cleavage of RNA, removing extra 3' nucleotides from tRNA precursor, generating 3' termini of tRNAs. A 3'-hydroxy group is left at the tRNA terminus and a 5'-phosphoryl group is left at the trailer molecule.</text>
        <dbReference type="EC" id="3.1.26.11"/>
    </reaction>
</comment>
<comment type="cofactor">
    <cofactor evidence="1">
        <name>Zn(2+)</name>
        <dbReference type="ChEBI" id="CHEBI:29105"/>
    </cofactor>
    <text evidence="1">Binds 2 Zn(2+) ions.</text>
</comment>
<comment type="subunit">
    <text evidence="1">Homodimer.</text>
</comment>
<comment type="similarity">
    <text evidence="1">Belongs to the RNase Z family.</text>
</comment>